<dbReference type="EC" id="3.1.21.10" evidence="1"/>
<dbReference type="EMBL" id="CP000243">
    <property type="protein sequence ID" value="ABE07543.1"/>
    <property type="molecule type" value="Genomic_DNA"/>
</dbReference>
<dbReference type="RefSeq" id="WP_001295503.1">
    <property type="nucleotide sequence ID" value="NZ_CP064825.1"/>
</dbReference>
<dbReference type="SMR" id="Q1RAS1"/>
<dbReference type="GeneID" id="89516631"/>
<dbReference type="KEGG" id="eci:UTI89_C2067"/>
<dbReference type="HOGENOM" id="CLU_091257_2_1_6"/>
<dbReference type="Proteomes" id="UP000001952">
    <property type="component" value="Chromosome"/>
</dbReference>
<dbReference type="GO" id="GO:0005737">
    <property type="term" value="C:cytoplasm"/>
    <property type="evidence" value="ECO:0007669"/>
    <property type="project" value="UniProtKB-SubCell"/>
</dbReference>
<dbReference type="GO" id="GO:0048476">
    <property type="term" value="C:Holliday junction resolvase complex"/>
    <property type="evidence" value="ECO:0007669"/>
    <property type="project" value="UniProtKB-UniRule"/>
</dbReference>
<dbReference type="GO" id="GO:0008821">
    <property type="term" value="F:crossover junction DNA endonuclease activity"/>
    <property type="evidence" value="ECO:0007669"/>
    <property type="project" value="UniProtKB-UniRule"/>
</dbReference>
<dbReference type="GO" id="GO:0003677">
    <property type="term" value="F:DNA binding"/>
    <property type="evidence" value="ECO:0007669"/>
    <property type="project" value="UniProtKB-KW"/>
</dbReference>
<dbReference type="GO" id="GO:0000287">
    <property type="term" value="F:magnesium ion binding"/>
    <property type="evidence" value="ECO:0007669"/>
    <property type="project" value="UniProtKB-UniRule"/>
</dbReference>
<dbReference type="GO" id="GO:0006310">
    <property type="term" value="P:DNA recombination"/>
    <property type="evidence" value="ECO:0007669"/>
    <property type="project" value="UniProtKB-UniRule"/>
</dbReference>
<dbReference type="GO" id="GO:0006281">
    <property type="term" value="P:DNA repair"/>
    <property type="evidence" value="ECO:0007669"/>
    <property type="project" value="UniProtKB-UniRule"/>
</dbReference>
<dbReference type="CDD" id="cd16962">
    <property type="entry name" value="RuvC"/>
    <property type="match status" value="1"/>
</dbReference>
<dbReference type="FunFam" id="3.30.420.10:FF:000002">
    <property type="entry name" value="Crossover junction endodeoxyribonuclease RuvC"/>
    <property type="match status" value="1"/>
</dbReference>
<dbReference type="Gene3D" id="3.30.420.10">
    <property type="entry name" value="Ribonuclease H-like superfamily/Ribonuclease H"/>
    <property type="match status" value="1"/>
</dbReference>
<dbReference type="HAMAP" id="MF_00034">
    <property type="entry name" value="RuvC"/>
    <property type="match status" value="1"/>
</dbReference>
<dbReference type="InterPro" id="IPR012337">
    <property type="entry name" value="RNaseH-like_sf"/>
</dbReference>
<dbReference type="InterPro" id="IPR036397">
    <property type="entry name" value="RNaseH_sf"/>
</dbReference>
<dbReference type="InterPro" id="IPR020563">
    <property type="entry name" value="X-over_junc_endoDNase_Mg_BS"/>
</dbReference>
<dbReference type="InterPro" id="IPR002176">
    <property type="entry name" value="X-over_junc_endoDNase_RuvC"/>
</dbReference>
<dbReference type="NCBIfam" id="NF000711">
    <property type="entry name" value="PRK00039.2-1"/>
    <property type="match status" value="1"/>
</dbReference>
<dbReference type="NCBIfam" id="TIGR00228">
    <property type="entry name" value="ruvC"/>
    <property type="match status" value="1"/>
</dbReference>
<dbReference type="PANTHER" id="PTHR30194">
    <property type="entry name" value="CROSSOVER JUNCTION ENDODEOXYRIBONUCLEASE RUVC"/>
    <property type="match status" value="1"/>
</dbReference>
<dbReference type="PANTHER" id="PTHR30194:SF3">
    <property type="entry name" value="CROSSOVER JUNCTION ENDODEOXYRIBONUCLEASE RUVC"/>
    <property type="match status" value="1"/>
</dbReference>
<dbReference type="Pfam" id="PF02075">
    <property type="entry name" value="RuvC"/>
    <property type="match status" value="1"/>
</dbReference>
<dbReference type="PRINTS" id="PR00696">
    <property type="entry name" value="RSOLVASERUVC"/>
</dbReference>
<dbReference type="SUPFAM" id="SSF53098">
    <property type="entry name" value="Ribonuclease H-like"/>
    <property type="match status" value="1"/>
</dbReference>
<dbReference type="PROSITE" id="PS01321">
    <property type="entry name" value="RUVC"/>
    <property type="match status" value="1"/>
</dbReference>
<reference key="1">
    <citation type="journal article" date="2006" name="Proc. Natl. Acad. Sci. U.S.A.">
        <title>Identification of genes subject to positive selection in uropathogenic strains of Escherichia coli: a comparative genomics approach.</title>
        <authorList>
            <person name="Chen S.L."/>
            <person name="Hung C.-S."/>
            <person name="Xu J."/>
            <person name="Reigstad C.S."/>
            <person name="Magrini V."/>
            <person name="Sabo A."/>
            <person name="Blasiar D."/>
            <person name="Bieri T."/>
            <person name="Meyer R.R."/>
            <person name="Ozersky P."/>
            <person name="Armstrong J.R."/>
            <person name="Fulton R.S."/>
            <person name="Latreille J.P."/>
            <person name="Spieth J."/>
            <person name="Hooton T.M."/>
            <person name="Mardis E.R."/>
            <person name="Hultgren S.J."/>
            <person name="Gordon J.I."/>
        </authorList>
    </citation>
    <scope>NUCLEOTIDE SEQUENCE [LARGE SCALE GENOMIC DNA]</scope>
    <source>
        <strain>UTI89 / UPEC</strain>
    </source>
</reference>
<protein>
    <recommendedName>
        <fullName evidence="1">Crossover junction endodeoxyribonuclease RuvC</fullName>
        <ecNumber evidence="1">3.1.21.10</ecNumber>
    </recommendedName>
    <alternativeName>
        <fullName evidence="1">Holliday junction nuclease RuvC</fullName>
    </alternativeName>
    <alternativeName>
        <fullName evidence="1">Holliday junction resolvase RuvC</fullName>
    </alternativeName>
</protein>
<feature type="chain" id="PRO_1000002751" description="Crossover junction endodeoxyribonuclease RuvC">
    <location>
        <begin position="1"/>
        <end position="173"/>
    </location>
</feature>
<feature type="active site" evidence="1">
    <location>
        <position position="8"/>
    </location>
</feature>
<feature type="active site" evidence="1">
    <location>
        <position position="67"/>
    </location>
</feature>
<feature type="active site" evidence="1">
    <location>
        <position position="139"/>
    </location>
</feature>
<feature type="binding site" evidence="1">
    <location>
        <position position="8"/>
    </location>
    <ligand>
        <name>Mg(2+)</name>
        <dbReference type="ChEBI" id="CHEBI:18420"/>
        <label>1</label>
    </ligand>
</feature>
<feature type="binding site" evidence="1">
    <location>
        <position position="67"/>
    </location>
    <ligand>
        <name>Mg(2+)</name>
        <dbReference type="ChEBI" id="CHEBI:18420"/>
        <label>2</label>
    </ligand>
</feature>
<feature type="binding site" evidence="1">
    <location>
        <position position="139"/>
    </location>
    <ligand>
        <name>Mg(2+)</name>
        <dbReference type="ChEBI" id="CHEBI:18420"/>
        <label>1</label>
    </ligand>
</feature>
<accession>Q1RAS1</accession>
<comment type="function">
    <text evidence="1">The RuvA-RuvB-RuvC complex processes Holliday junction (HJ) DNA during genetic recombination and DNA repair. Endonuclease that resolves HJ intermediates. Cleaves cruciform DNA by making single-stranded nicks across the HJ at symmetrical positions within the homologous arms, yielding a 5'-phosphate and a 3'-hydroxyl group; requires a central core of homology in the junction. The consensus cleavage sequence is 5'-(A/T)TT(C/G)-3'. Cleavage occurs on the 3'-side of the TT dinucleotide at the point of strand exchange. HJ branch migration catalyzed by RuvA-RuvB allows RuvC to scan DNA until it finds its consensus sequence, where it cleaves and resolves the cruciform DNA.</text>
</comment>
<comment type="catalytic activity">
    <reaction evidence="1">
        <text>Endonucleolytic cleavage at a junction such as a reciprocal single-stranded crossover between two homologous DNA duplexes (Holliday junction).</text>
        <dbReference type="EC" id="3.1.21.10"/>
    </reaction>
</comment>
<comment type="cofactor">
    <cofactor evidence="1">
        <name>Mg(2+)</name>
        <dbReference type="ChEBI" id="CHEBI:18420"/>
    </cofactor>
    <text evidence="1">Binds 2 Mg(2+) ion per subunit.</text>
</comment>
<comment type="subunit">
    <text evidence="1">Homodimer which binds Holliday junction (HJ) DNA. The HJ becomes 2-fold symmetrical on binding to RuvC with unstacked arms; it has a different conformation from HJ DNA in complex with RuvA. In the full resolvosome a probable DNA-RuvA(4)-RuvB(12)-RuvC(2) complex forms which resolves the HJ.</text>
</comment>
<comment type="subcellular location">
    <subcellularLocation>
        <location evidence="1">Cytoplasm</location>
    </subcellularLocation>
</comment>
<comment type="similarity">
    <text evidence="1">Belongs to the RuvC family.</text>
</comment>
<proteinExistence type="inferred from homology"/>
<gene>
    <name evidence="1" type="primary">ruvC</name>
    <name type="ordered locus">UTI89_C2067</name>
</gene>
<keyword id="KW-0963">Cytoplasm</keyword>
<keyword id="KW-0227">DNA damage</keyword>
<keyword id="KW-0233">DNA recombination</keyword>
<keyword id="KW-0234">DNA repair</keyword>
<keyword id="KW-0238">DNA-binding</keyword>
<keyword id="KW-0255">Endonuclease</keyword>
<keyword id="KW-0378">Hydrolase</keyword>
<keyword id="KW-0460">Magnesium</keyword>
<keyword id="KW-0479">Metal-binding</keyword>
<keyword id="KW-0540">Nuclease</keyword>
<evidence type="ECO:0000255" key="1">
    <source>
        <dbReference type="HAMAP-Rule" id="MF_00034"/>
    </source>
</evidence>
<name>RUVC_ECOUT</name>
<sequence>MAIILGIDPGSRVTGYGVIRQVGRQLSYLGSGCIRTKVDDLPSRLKLIYAGVTEIITQFQPDYFAIEQVFMAKNADSALKLGQARGVAIVAAVNQELPVFEYAARQVKQTVVGIGSAEKSQVQHMVRTLLKLPANPQADAADALAIAITHCHVSQNAMQMSESRLNLARGRLR</sequence>
<organism>
    <name type="scientific">Escherichia coli (strain UTI89 / UPEC)</name>
    <dbReference type="NCBI Taxonomy" id="364106"/>
    <lineage>
        <taxon>Bacteria</taxon>
        <taxon>Pseudomonadati</taxon>
        <taxon>Pseudomonadota</taxon>
        <taxon>Gammaproteobacteria</taxon>
        <taxon>Enterobacterales</taxon>
        <taxon>Enterobacteriaceae</taxon>
        <taxon>Escherichia</taxon>
    </lineage>
</organism>